<keyword id="KW-1003">Cell membrane</keyword>
<keyword id="KW-0249">Electron transport</keyword>
<keyword id="KW-0349">Heme</keyword>
<keyword id="KW-0408">Iron</keyword>
<keyword id="KW-0472">Membrane</keyword>
<keyword id="KW-0479">Metal-binding</keyword>
<keyword id="KW-0812">Transmembrane</keyword>
<keyword id="KW-1133">Transmembrane helix</keyword>
<keyword id="KW-0813">Transport</keyword>
<protein>
    <recommendedName>
        <fullName>Menaquinol:cytochrome c reductase cytochrome c subunit</fullName>
    </recommendedName>
    <alternativeName>
        <fullName>Cytochrome bc complex, cytochrome c subunit</fullName>
    </alternativeName>
</protein>
<reference key="1">
    <citation type="journal article" date="1996" name="J. Biol. Chem.">
        <title>Bacillus stearothermophilus qcr operon encoding Rieske FeS protein, cytochrome b6, and a novel-type cytochrome c1 of quinol-cytochrome c reductase.</title>
        <authorList>
            <person name="Sone N."/>
            <person name="Tsuchiya N."/>
            <person name="Inoue M."/>
            <person name="Noguchi S."/>
        </authorList>
    </citation>
    <scope>NUCLEOTIDE SEQUENCE [GENOMIC DNA]</scope>
    <scope>FUNCTION</scope>
    <scope>SUBUNIT</scope>
    <source>
        <strain>K1041</strain>
    </source>
</reference>
<organism>
    <name type="scientific">Geobacillus thermodenitrificans</name>
    <dbReference type="NCBI Taxonomy" id="33940"/>
    <lineage>
        <taxon>Bacteria</taxon>
        <taxon>Bacillati</taxon>
        <taxon>Bacillota</taxon>
        <taxon>Bacilli</taxon>
        <taxon>Bacillales</taxon>
        <taxon>Anoxybacillaceae</taxon>
        <taxon>Geobacillus</taxon>
    </lineage>
</organism>
<evidence type="ECO:0000255" key="1">
    <source>
        <dbReference type="PROSITE-ProRule" id="PRU00433"/>
    </source>
</evidence>
<evidence type="ECO:0000255" key="2">
    <source>
        <dbReference type="PROSITE-ProRule" id="PRU00967"/>
    </source>
</evidence>
<evidence type="ECO:0000256" key="3">
    <source>
        <dbReference type="SAM" id="MobiDB-lite"/>
    </source>
</evidence>
<evidence type="ECO:0000305" key="4"/>
<evidence type="ECO:0000305" key="5">
    <source>
    </source>
</evidence>
<gene>
    <name type="primary">qcrC</name>
</gene>
<dbReference type="EMBL" id="D83789">
    <property type="protein sequence ID" value="BAA12118.1"/>
    <property type="molecule type" value="Genomic_DNA"/>
</dbReference>
<dbReference type="STRING" id="33940.GTHT12_01702"/>
<dbReference type="GO" id="GO:0005886">
    <property type="term" value="C:plasma membrane"/>
    <property type="evidence" value="ECO:0007669"/>
    <property type="project" value="UniProtKB-SubCell"/>
</dbReference>
<dbReference type="GO" id="GO:0009055">
    <property type="term" value="F:electron transfer activity"/>
    <property type="evidence" value="ECO:0007669"/>
    <property type="project" value="InterPro"/>
</dbReference>
<dbReference type="GO" id="GO:0020037">
    <property type="term" value="F:heme binding"/>
    <property type="evidence" value="ECO:0007669"/>
    <property type="project" value="InterPro"/>
</dbReference>
<dbReference type="GO" id="GO:0005506">
    <property type="term" value="F:iron ion binding"/>
    <property type="evidence" value="ECO:0007669"/>
    <property type="project" value="InterPro"/>
</dbReference>
<dbReference type="GO" id="GO:0016491">
    <property type="term" value="F:oxidoreductase activity"/>
    <property type="evidence" value="ECO:0007669"/>
    <property type="project" value="InterPro"/>
</dbReference>
<dbReference type="Gene3D" id="1.20.810.10">
    <property type="entry name" value="Cytochrome Bc1 Complex, Chain C"/>
    <property type="match status" value="1"/>
</dbReference>
<dbReference type="Gene3D" id="1.10.760.10">
    <property type="entry name" value="Cytochrome c-like domain"/>
    <property type="match status" value="1"/>
</dbReference>
<dbReference type="InterPro" id="IPR005798">
    <property type="entry name" value="Cyt_b/b6_C"/>
</dbReference>
<dbReference type="InterPro" id="IPR036150">
    <property type="entry name" value="Cyt_b/b6_C_sf"/>
</dbReference>
<dbReference type="InterPro" id="IPR009056">
    <property type="entry name" value="Cyt_c-like_dom"/>
</dbReference>
<dbReference type="InterPro" id="IPR036909">
    <property type="entry name" value="Cyt_c-like_dom_sf"/>
</dbReference>
<dbReference type="InterPro" id="IPR027387">
    <property type="entry name" value="Cytb/b6-like_sf"/>
</dbReference>
<dbReference type="InterPro" id="IPR051811">
    <property type="entry name" value="Cytochrome_c550/c551-like"/>
</dbReference>
<dbReference type="InterPro" id="IPR012049">
    <property type="entry name" value="MenaQ_cyt_c_Rdtase_cyt_b/c-su"/>
</dbReference>
<dbReference type="PANTHER" id="PTHR37823">
    <property type="entry name" value="CYTOCHROME C-553-LIKE"/>
    <property type="match status" value="1"/>
</dbReference>
<dbReference type="PANTHER" id="PTHR37823:SF4">
    <property type="entry name" value="MENAQUINOL-CYTOCHROME C REDUCTASE CYTOCHROME B_C SUBUNIT"/>
    <property type="match status" value="1"/>
</dbReference>
<dbReference type="Pfam" id="PF00032">
    <property type="entry name" value="Cytochrom_B_C"/>
    <property type="match status" value="1"/>
</dbReference>
<dbReference type="Pfam" id="PF13442">
    <property type="entry name" value="Cytochrome_CBB3"/>
    <property type="match status" value="1"/>
</dbReference>
<dbReference type="PIRSF" id="PIRSF036636">
    <property type="entry name" value="QcrC"/>
    <property type="match status" value="1"/>
</dbReference>
<dbReference type="SUPFAM" id="SSF81648">
    <property type="entry name" value="a domain/subunit of cytochrome bc1 complex (Ubiquinol-cytochrome c reductase)"/>
    <property type="match status" value="1"/>
</dbReference>
<dbReference type="SUPFAM" id="SSF46626">
    <property type="entry name" value="Cytochrome c"/>
    <property type="match status" value="1"/>
</dbReference>
<dbReference type="PROSITE" id="PS51003">
    <property type="entry name" value="CYTB_CTER"/>
    <property type="match status" value="1"/>
</dbReference>
<dbReference type="PROSITE" id="PS51007">
    <property type="entry name" value="CYTC"/>
    <property type="match status" value="1"/>
</dbReference>
<comment type="function">
    <text evidence="5">Component of the menaquinol:cytochrome c reductase complex.</text>
</comment>
<comment type="cofactor">
    <cofactor evidence="5">
        <name>heme c</name>
        <dbReference type="ChEBI" id="CHEBI:61717"/>
    </cofactor>
</comment>
<comment type="subunit">
    <text evidence="5">The main subunits of the menaquinol:cytochrome c complex are a Rieske-type iron-sulfur protein (QcrA), a cytochrome b (QcrB) and a cytochrome c (QcrC).</text>
</comment>
<comment type="subcellular location">
    <subcellularLocation>
        <location evidence="4">Cell membrane</location>
        <topology evidence="4">Multi-pass membrane protein</topology>
    </subcellularLocation>
</comment>
<comment type="similarity">
    <text evidence="2">Belongs to the cytochrome b family.</text>
</comment>
<proteinExistence type="evidence at protein level"/>
<name>QCRC_GEOTD</name>
<sequence>MHRGKGMKFVGDSRIPAVRKPNIPKDYSEYPGKTEVFWPNFLLKEWLVGSVFLVGFLCLTVAHPSPLERIADPTDTTYIPLPDWYFLFLYQLLKYSYASGPYTVIGAIVMPGLAFGALLLAPFLDRGPERRPWKRPVATGMMLLTLAAIVYLTWESVVTHDWEKAAEQGKIRAEVEIDTNAEGYKIAQANTCTSCHGENLSGGAGPSLVGTGLTAEEIAKIAKEGQGSMPGGIFKGTDEELQKMANSSPA</sequence>
<accession>Q45659</accession>
<feature type="chain" id="PRO_0000061921" description="Menaquinol:cytochrome c reductase cytochrome c subunit">
    <location>
        <begin position="1"/>
        <end position="250"/>
    </location>
</feature>
<feature type="transmembrane region" description="Helical" evidence="2">
    <location>
        <begin position="46"/>
        <end position="62"/>
    </location>
</feature>
<feature type="transmembrane region" description="Helical" evidence="2">
    <location>
        <begin position="104"/>
        <end position="124"/>
    </location>
</feature>
<feature type="transmembrane region" description="Helical" evidence="2">
    <location>
        <begin position="137"/>
        <end position="157"/>
    </location>
</feature>
<feature type="domain" description="Cytochrome c" evidence="1">
    <location>
        <begin position="178"/>
        <end position="250"/>
    </location>
</feature>
<feature type="region of interest" description="Disordered" evidence="3">
    <location>
        <begin position="229"/>
        <end position="250"/>
    </location>
</feature>
<feature type="binding site" description="covalent" evidence="1">
    <location>
        <position position="192"/>
    </location>
    <ligand>
        <name>heme c</name>
        <dbReference type="ChEBI" id="CHEBI:61717"/>
    </ligand>
</feature>
<feature type="binding site" description="covalent" evidence="1">
    <location>
        <position position="195"/>
    </location>
    <ligand>
        <name>heme c</name>
        <dbReference type="ChEBI" id="CHEBI:61717"/>
    </ligand>
</feature>
<feature type="binding site" description="axial binding residue" evidence="1">
    <location>
        <position position="196"/>
    </location>
    <ligand>
        <name>heme c</name>
        <dbReference type="ChEBI" id="CHEBI:61717"/>
    </ligand>
    <ligandPart>
        <name>Fe</name>
        <dbReference type="ChEBI" id="CHEBI:18248"/>
    </ligandPart>
</feature>